<sequence length="287" mass="32540">MNSKKHLGHTARKRFGQNFLHDTSVIQGIVAAIYPQPNQFLVEIGPGLGALTEPVGELVDHLTVVELDRDLAERLRHHPFLHQKLTVIETDAMQFDFGALYTKENLAEKGQKLRVFGNLPYNISTPLMFHLFKYHDVIQDMHFMLQKEVVKRLCAAPNSKAYGRLTIMAQYFCQVMPVLEVPPSAFKPAPKVDSAVVRLIPHKELPHPVKDLYWLNRVCSQAFNQRRKTLRNALSTLFSPENLTALGIDLNARAENLAIADYARLANWLADNPPADINKDEILDSEE</sequence>
<feature type="chain" id="PRO_1000056623" description="Ribosomal RNA small subunit methyltransferase A">
    <location>
        <begin position="1"/>
        <end position="287"/>
    </location>
</feature>
<feature type="binding site" evidence="1">
    <location>
        <position position="18"/>
    </location>
    <ligand>
        <name>S-adenosyl-L-methionine</name>
        <dbReference type="ChEBI" id="CHEBI:59789"/>
    </ligand>
</feature>
<feature type="binding site" evidence="1">
    <location>
        <position position="20"/>
    </location>
    <ligand>
        <name>S-adenosyl-L-methionine</name>
        <dbReference type="ChEBI" id="CHEBI:59789"/>
    </ligand>
</feature>
<feature type="binding site" evidence="1">
    <location>
        <position position="45"/>
    </location>
    <ligand>
        <name>S-adenosyl-L-methionine</name>
        <dbReference type="ChEBI" id="CHEBI:59789"/>
    </ligand>
</feature>
<feature type="binding site" evidence="1">
    <location>
        <position position="66"/>
    </location>
    <ligand>
        <name>S-adenosyl-L-methionine</name>
        <dbReference type="ChEBI" id="CHEBI:59789"/>
    </ligand>
</feature>
<feature type="binding site" evidence="1">
    <location>
        <position position="91"/>
    </location>
    <ligand>
        <name>S-adenosyl-L-methionine</name>
        <dbReference type="ChEBI" id="CHEBI:59789"/>
    </ligand>
</feature>
<feature type="binding site" evidence="1">
    <location>
        <position position="118"/>
    </location>
    <ligand>
        <name>S-adenosyl-L-methionine</name>
        <dbReference type="ChEBI" id="CHEBI:59789"/>
    </ligand>
</feature>
<accession>A5U9U3</accession>
<organism>
    <name type="scientific">Haemophilus influenzae (strain PittEE)</name>
    <dbReference type="NCBI Taxonomy" id="374930"/>
    <lineage>
        <taxon>Bacteria</taxon>
        <taxon>Pseudomonadati</taxon>
        <taxon>Pseudomonadota</taxon>
        <taxon>Gammaproteobacteria</taxon>
        <taxon>Pasteurellales</taxon>
        <taxon>Pasteurellaceae</taxon>
        <taxon>Haemophilus</taxon>
    </lineage>
</organism>
<name>RSMA_HAEIE</name>
<keyword id="KW-0963">Cytoplasm</keyword>
<keyword id="KW-0489">Methyltransferase</keyword>
<keyword id="KW-0694">RNA-binding</keyword>
<keyword id="KW-0698">rRNA processing</keyword>
<keyword id="KW-0949">S-adenosyl-L-methionine</keyword>
<keyword id="KW-0808">Transferase</keyword>
<evidence type="ECO:0000255" key="1">
    <source>
        <dbReference type="HAMAP-Rule" id="MF_00607"/>
    </source>
</evidence>
<protein>
    <recommendedName>
        <fullName evidence="1">Ribosomal RNA small subunit methyltransferase A</fullName>
        <ecNumber evidence="1">2.1.1.182</ecNumber>
    </recommendedName>
    <alternativeName>
        <fullName evidence="1">16S rRNA (adenine(1518)-N(6)/adenine(1519)-N(6))-dimethyltransferase</fullName>
    </alternativeName>
    <alternativeName>
        <fullName evidence="1">16S rRNA dimethyladenosine transferase</fullName>
    </alternativeName>
    <alternativeName>
        <fullName evidence="1">16S rRNA dimethylase</fullName>
    </alternativeName>
    <alternativeName>
        <fullName evidence="1">S-adenosylmethionine-6-N', N'-adenosyl(rRNA) dimethyltransferase</fullName>
    </alternativeName>
</protein>
<proteinExistence type="inferred from homology"/>
<gene>
    <name evidence="1" type="primary">rsmA</name>
    <name evidence="1" type="synonym">ksgA</name>
    <name type="ordered locus">CGSHiEE_00230</name>
</gene>
<comment type="function">
    <text evidence="1">Specifically dimethylates two adjacent adenosines (A1518 and A1519) in the loop of a conserved hairpin near the 3'-end of 16S rRNA in the 30S particle. May play a critical role in biogenesis of 30S subunits.</text>
</comment>
<comment type="catalytic activity">
    <reaction evidence="1">
        <text>adenosine(1518)/adenosine(1519) in 16S rRNA + 4 S-adenosyl-L-methionine = N(6)-dimethyladenosine(1518)/N(6)-dimethyladenosine(1519) in 16S rRNA + 4 S-adenosyl-L-homocysteine + 4 H(+)</text>
        <dbReference type="Rhea" id="RHEA:19609"/>
        <dbReference type="Rhea" id="RHEA-COMP:10232"/>
        <dbReference type="Rhea" id="RHEA-COMP:10233"/>
        <dbReference type="ChEBI" id="CHEBI:15378"/>
        <dbReference type="ChEBI" id="CHEBI:57856"/>
        <dbReference type="ChEBI" id="CHEBI:59789"/>
        <dbReference type="ChEBI" id="CHEBI:74411"/>
        <dbReference type="ChEBI" id="CHEBI:74493"/>
        <dbReference type="EC" id="2.1.1.182"/>
    </reaction>
</comment>
<comment type="subcellular location">
    <subcellularLocation>
        <location evidence="1">Cytoplasm</location>
    </subcellularLocation>
</comment>
<comment type="similarity">
    <text evidence="1">Belongs to the class I-like SAM-binding methyltransferase superfamily. rRNA adenine N(6)-methyltransferase family. RsmA subfamily.</text>
</comment>
<dbReference type="EC" id="2.1.1.182" evidence="1"/>
<dbReference type="EMBL" id="CP000671">
    <property type="protein sequence ID" value="ABQ97544.1"/>
    <property type="molecule type" value="Genomic_DNA"/>
</dbReference>
<dbReference type="SMR" id="A5U9U3"/>
<dbReference type="KEGG" id="hip:CGSHiEE_00230"/>
<dbReference type="HOGENOM" id="CLU_041220_0_1_6"/>
<dbReference type="GO" id="GO:0005829">
    <property type="term" value="C:cytosol"/>
    <property type="evidence" value="ECO:0007669"/>
    <property type="project" value="TreeGrafter"/>
</dbReference>
<dbReference type="GO" id="GO:0052908">
    <property type="term" value="F:16S rRNA (adenine(1518)-N(6)/adenine(1519)-N(6))-dimethyltransferase activity"/>
    <property type="evidence" value="ECO:0007669"/>
    <property type="project" value="UniProtKB-EC"/>
</dbReference>
<dbReference type="GO" id="GO:0003723">
    <property type="term" value="F:RNA binding"/>
    <property type="evidence" value="ECO:0007669"/>
    <property type="project" value="UniProtKB-KW"/>
</dbReference>
<dbReference type="FunFam" id="1.10.8.100:FF:000001">
    <property type="entry name" value="Ribosomal RNA small subunit methyltransferase A"/>
    <property type="match status" value="1"/>
</dbReference>
<dbReference type="FunFam" id="3.40.50.150:FF:000006">
    <property type="entry name" value="Ribosomal RNA small subunit methyltransferase A"/>
    <property type="match status" value="1"/>
</dbReference>
<dbReference type="Gene3D" id="1.10.8.100">
    <property type="entry name" value="Ribosomal RNA adenine dimethylase-like, domain 2"/>
    <property type="match status" value="1"/>
</dbReference>
<dbReference type="Gene3D" id="3.40.50.150">
    <property type="entry name" value="Vaccinia Virus protein VP39"/>
    <property type="match status" value="1"/>
</dbReference>
<dbReference type="HAMAP" id="MF_00607">
    <property type="entry name" value="16SrRNA_methyltr_A"/>
    <property type="match status" value="1"/>
</dbReference>
<dbReference type="InterPro" id="IPR001737">
    <property type="entry name" value="KsgA/Erm"/>
</dbReference>
<dbReference type="InterPro" id="IPR023165">
    <property type="entry name" value="rRNA_Ade_diMease-like_C"/>
</dbReference>
<dbReference type="InterPro" id="IPR020596">
    <property type="entry name" value="rRNA_Ade_Mease_Trfase_CS"/>
</dbReference>
<dbReference type="InterPro" id="IPR020598">
    <property type="entry name" value="rRNA_Ade_methylase_Trfase_N"/>
</dbReference>
<dbReference type="InterPro" id="IPR011530">
    <property type="entry name" value="rRNA_adenine_dimethylase"/>
</dbReference>
<dbReference type="InterPro" id="IPR029063">
    <property type="entry name" value="SAM-dependent_MTases_sf"/>
</dbReference>
<dbReference type="NCBIfam" id="TIGR00755">
    <property type="entry name" value="ksgA"/>
    <property type="match status" value="1"/>
</dbReference>
<dbReference type="PANTHER" id="PTHR11727">
    <property type="entry name" value="DIMETHYLADENOSINE TRANSFERASE"/>
    <property type="match status" value="1"/>
</dbReference>
<dbReference type="PANTHER" id="PTHR11727:SF7">
    <property type="entry name" value="DIMETHYLADENOSINE TRANSFERASE-RELATED"/>
    <property type="match status" value="1"/>
</dbReference>
<dbReference type="Pfam" id="PF00398">
    <property type="entry name" value="RrnaAD"/>
    <property type="match status" value="1"/>
</dbReference>
<dbReference type="SMART" id="SM00650">
    <property type="entry name" value="rADc"/>
    <property type="match status" value="1"/>
</dbReference>
<dbReference type="SUPFAM" id="SSF53335">
    <property type="entry name" value="S-adenosyl-L-methionine-dependent methyltransferases"/>
    <property type="match status" value="1"/>
</dbReference>
<dbReference type="PROSITE" id="PS01131">
    <property type="entry name" value="RRNA_A_DIMETH"/>
    <property type="match status" value="1"/>
</dbReference>
<dbReference type="PROSITE" id="PS51689">
    <property type="entry name" value="SAM_RNA_A_N6_MT"/>
    <property type="match status" value="1"/>
</dbReference>
<reference key="1">
    <citation type="journal article" date="2007" name="Genome Biol.">
        <title>Characterization and modeling of the Haemophilus influenzae core and supragenomes based on the complete genomic sequences of Rd and 12 clinical nontypeable strains.</title>
        <authorList>
            <person name="Hogg J.S."/>
            <person name="Hu F.Z."/>
            <person name="Janto B."/>
            <person name="Boissy R."/>
            <person name="Hayes J."/>
            <person name="Keefe R."/>
            <person name="Post J.C."/>
            <person name="Ehrlich G.D."/>
        </authorList>
    </citation>
    <scope>NUCLEOTIDE SEQUENCE [LARGE SCALE GENOMIC DNA]</scope>
    <source>
        <strain>PittEE</strain>
    </source>
</reference>